<accession>Q9UVS8</accession>
<feature type="signal peptide" evidence="2">
    <location>
        <begin position="1"/>
        <end position="21"/>
    </location>
</feature>
<feature type="chain" id="PRO_5000056395" description="1,4-beta-D-glucan cellobiohydrolase B">
    <location>
        <begin position="22"/>
        <end position="536"/>
    </location>
</feature>
<feature type="domain" description="CBM1" evidence="3">
    <location>
        <begin position="500"/>
        <end position="536"/>
    </location>
</feature>
<feature type="region of interest" description="Catalytic">
    <location>
        <begin position="22"/>
        <end position="458"/>
    </location>
</feature>
<feature type="region of interest" description="Ser/Thr-rich linker">
    <location>
        <begin position="459"/>
        <end position="500"/>
    </location>
</feature>
<feature type="region of interest" description="Disordered" evidence="4">
    <location>
        <begin position="464"/>
        <end position="499"/>
    </location>
</feature>
<feature type="active site" description="Nucleophile" evidence="1">
    <location>
        <position position="233"/>
    </location>
</feature>
<feature type="active site" description="Proton donor" evidence="1">
    <location>
        <position position="238"/>
    </location>
</feature>
<feature type="glycosylation site" description="N-linked (GlcNAc...) asparagine" evidence="2">
    <location>
        <position position="351"/>
    </location>
</feature>
<feature type="glycosylation site" description="N-linked (GlcNAc...) asparagine" evidence="2">
    <location>
        <position position="414"/>
    </location>
</feature>
<feature type="disulfide bond" evidence="1">
    <location>
        <begin position="508"/>
        <end position="525"/>
    </location>
</feature>
<feature type="disulfide bond" evidence="1">
    <location>
        <begin position="519"/>
        <end position="535"/>
    </location>
</feature>
<proteinExistence type="evidence at transcript level"/>
<keyword id="KW-0119">Carbohydrate metabolism</keyword>
<keyword id="KW-0136">Cellulose degradation</keyword>
<keyword id="KW-1015">Disulfide bond</keyword>
<keyword id="KW-0325">Glycoprotein</keyword>
<keyword id="KW-0326">Glycosidase</keyword>
<keyword id="KW-0378">Hydrolase</keyword>
<keyword id="KW-0624">Polysaccharide degradation</keyword>
<keyword id="KW-0964">Secreted</keyword>
<keyword id="KW-0732">Signal</keyword>
<sequence>MSSFQIYRAALLLSILATANAQQVGTYTTETHPSLTWQTCTSDGSCTTNDGEVVIDANWRWVHSTSSATNCYTGNEWDTSICTDDVTCAANCALDGATYEATYGVTTSGSELRLNFVTQGSSKNIGSRLYLMSDDSNYELFKLLGQEFTFDVDVSNLPCGLNGALYFVAMDADGGTSEYSGNKAGAKYGTGYCDSQCPRDLKFINGEANCDGWEPSSNNVNTGVGDHGSCCAEMDVWEANSISNAFTAHPCDSVSQTMCDGDSCGGTYSASGDRYSGTCDPDGCDYNPYRLGNTDFYGPGLTVDTNSPFTVVTQFITDDGTSSGTLTEIKRLYVQNGEVIANGASTYSSVNGSSITSAFCESEKTLFGDENVFDKHGGLEGMGEAMAKGMVLVLSLWDDYAADMLWLDSDYPVNSSASTPGVARGTCSTDSGVPATVEAESPNAYVTYSNIKFGPIGSTYSSGSSSGSGSSSSSSSTTTKATSTTLKTTSTTSSGSSSTSAAQAYGQCGGQGWTGPTTCVSGYTCTYENAYYSQCL</sequence>
<organism>
    <name type="scientific">Aspergillus niger</name>
    <dbReference type="NCBI Taxonomy" id="5061"/>
    <lineage>
        <taxon>Eukaryota</taxon>
        <taxon>Fungi</taxon>
        <taxon>Dikarya</taxon>
        <taxon>Ascomycota</taxon>
        <taxon>Pezizomycotina</taxon>
        <taxon>Eurotiomycetes</taxon>
        <taxon>Eurotiomycetidae</taxon>
        <taxon>Eurotiales</taxon>
        <taxon>Aspergillaceae</taxon>
        <taxon>Aspergillus</taxon>
        <taxon>Aspergillus subgen. Circumdati</taxon>
    </lineage>
</organism>
<protein>
    <recommendedName>
        <fullName>1,4-beta-D-glucan cellobiohydrolase B</fullName>
        <ecNumber>3.2.1.91</ecNumber>
    </recommendedName>
    <alternativeName>
        <fullName>Beta-glucancellobiohydrolase B</fullName>
    </alternativeName>
    <alternativeName>
        <fullName>Exocellobiohydrolase B</fullName>
    </alternativeName>
    <alternativeName>
        <fullName>Exoglucanase B</fullName>
    </alternativeName>
</protein>
<evidence type="ECO:0000250" key="1"/>
<evidence type="ECO:0000255" key="2"/>
<evidence type="ECO:0000255" key="3">
    <source>
        <dbReference type="PROSITE-ProRule" id="PRU00597"/>
    </source>
</evidence>
<evidence type="ECO:0000256" key="4">
    <source>
        <dbReference type="SAM" id="MobiDB-lite"/>
    </source>
</evidence>
<evidence type="ECO:0000269" key="5">
    <source>
    </source>
</evidence>
<evidence type="ECO:0000269" key="6">
    <source>
    </source>
</evidence>
<evidence type="ECO:0000305" key="7"/>
<comment type="function">
    <text evidence="1 6">The biological conversion of cellulose to glucose generally requires three types of hydrolytic enzymes: (1) Endoglucanases which cut internal beta-1,4-glucosidic bonds; (2) Exocellobiohydrolases that cut the disaccharide cellobiose from the non-reducing end of the cellulose polymer chain; (3) Beta-1,4-glucosidases which hydrolyze the cellobiose and other short cello-oligosaccharides to glucose.</text>
</comment>
<comment type="catalytic activity">
    <reaction>
        <text>Hydrolysis of (1-&gt;4)-beta-D-glucosidic linkages in cellulose and cellotetraose, releasing cellobiose from the non-reducing ends of the chains.</text>
        <dbReference type="EC" id="3.2.1.91"/>
    </reaction>
</comment>
<comment type="subcellular location">
    <subcellularLocation>
        <location evidence="7">Secreted</location>
    </subcellularLocation>
</comment>
<comment type="induction">
    <text evidence="5 6">Expression is under the control of the xylanolytic transcriptional activator xlnR.</text>
</comment>
<comment type="similarity">
    <text evidence="7">Belongs to the glycosyl hydrolase 7 (cellulase C) family.</text>
</comment>
<reference key="1">
    <citation type="journal article" date="1999" name="Appl. Environ. Microbiol.">
        <title>Two cellobiohydrolase-encoding genes from Aspergillus niger require D-xylose and the xylanolytic transcriptional activator XlnR for their expression.</title>
        <authorList>
            <person name="Gielkens M.M."/>
            <person name="Dekkers E."/>
            <person name="Visser J."/>
            <person name="de Graaff L.H."/>
        </authorList>
    </citation>
    <scope>NUCLEOTIDE SEQUENCE [GENOMIC DNA]</scope>
    <scope>INDUCTION</scope>
    <source>
        <strain>ATCC 9029 / NRRL 3 / CBS 120.49 / DSM 2466 / N400 / FGSC 732</strain>
    </source>
</reference>
<reference key="2">
    <citation type="journal article" date="2004" name="Bioresour. Technol.">
        <title>Induction, production, repression, and de-repression of exoglucanase synthesis in Aspergillus niger.</title>
        <authorList>
            <person name="Hanif A."/>
            <person name="Yasmeen A."/>
            <person name="Rajoka M.I."/>
        </authorList>
    </citation>
    <scope>FUNCTION</scope>
    <scope>INDUCTION</scope>
</reference>
<dbReference type="EC" id="3.2.1.91"/>
<dbReference type="EMBL" id="AF156269">
    <property type="protein sequence ID" value="AAF04492.1"/>
    <property type="molecule type" value="Genomic_DNA"/>
</dbReference>
<dbReference type="SMR" id="Q9UVS8"/>
<dbReference type="CAZy" id="CBM1">
    <property type="family name" value="Carbohydrate-Binding Module Family 1"/>
</dbReference>
<dbReference type="CAZy" id="GH7">
    <property type="family name" value="Glycoside Hydrolase Family 7"/>
</dbReference>
<dbReference type="GlyCosmos" id="Q9UVS8">
    <property type="glycosylation" value="2 sites, No reported glycans"/>
</dbReference>
<dbReference type="PaxDb" id="5061-CADANGAP00001127"/>
<dbReference type="VEuPathDB" id="FungiDB:An01g11660"/>
<dbReference type="VEuPathDB" id="FungiDB:ASPNIDRAFT2_1117716"/>
<dbReference type="VEuPathDB" id="FungiDB:ATCC64974_14090"/>
<dbReference type="VEuPathDB" id="FungiDB:M747DRAFT_286038"/>
<dbReference type="eggNOG" id="ENOG502QPHV">
    <property type="taxonomic scope" value="Eukaryota"/>
</dbReference>
<dbReference type="BRENDA" id="3.2.1.91">
    <property type="organism ID" value="518"/>
</dbReference>
<dbReference type="GO" id="GO:0005576">
    <property type="term" value="C:extracellular region"/>
    <property type="evidence" value="ECO:0007669"/>
    <property type="project" value="UniProtKB-SubCell"/>
</dbReference>
<dbReference type="GO" id="GO:0016162">
    <property type="term" value="F:cellulose 1,4-beta-cellobiosidase activity"/>
    <property type="evidence" value="ECO:0007669"/>
    <property type="project" value="UniProtKB-EC"/>
</dbReference>
<dbReference type="GO" id="GO:0030248">
    <property type="term" value="F:cellulose binding"/>
    <property type="evidence" value="ECO:0007669"/>
    <property type="project" value="InterPro"/>
</dbReference>
<dbReference type="GO" id="GO:0030245">
    <property type="term" value="P:cellulose catabolic process"/>
    <property type="evidence" value="ECO:0007669"/>
    <property type="project" value="UniProtKB-KW"/>
</dbReference>
<dbReference type="CDD" id="cd07999">
    <property type="entry name" value="GH7_CBH_EG"/>
    <property type="match status" value="1"/>
</dbReference>
<dbReference type="FunFam" id="2.70.100.10:FF:000001">
    <property type="entry name" value="Glucanase"/>
    <property type="match status" value="1"/>
</dbReference>
<dbReference type="Gene3D" id="2.70.100.10">
    <property type="entry name" value="Glycoside hydrolase, family 7, domain"/>
    <property type="match status" value="1"/>
</dbReference>
<dbReference type="InterPro" id="IPR035971">
    <property type="entry name" value="CBD_sf"/>
</dbReference>
<dbReference type="InterPro" id="IPR000254">
    <property type="entry name" value="Cellulose-bd_dom_fun"/>
</dbReference>
<dbReference type="InterPro" id="IPR013320">
    <property type="entry name" value="ConA-like_dom_sf"/>
</dbReference>
<dbReference type="InterPro" id="IPR001722">
    <property type="entry name" value="Glyco_hydro_7"/>
</dbReference>
<dbReference type="InterPro" id="IPR037019">
    <property type="entry name" value="Glyco_hydro_7_sf"/>
</dbReference>
<dbReference type="PANTHER" id="PTHR33753">
    <property type="entry name" value="1,4-BETA-D-GLUCAN CELLOBIOHYDROLASE B"/>
    <property type="match status" value="1"/>
</dbReference>
<dbReference type="PANTHER" id="PTHR33753:SF2">
    <property type="entry name" value="GLYCOSIDE HYDROLASE FAMILY 7 PROTEIN"/>
    <property type="match status" value="1"/>
</dbReference>
<dbReference type="Pfam" id="PF00734">
    <property type="entry name" value="CBM_1"/>
    <property type="match status" value="1"/>
</dbReference>
<dbReference type="Pfam" id="PF00840">
    <property type="entry name" value="Glyco_hydro_7"/>
    <property type="match status" value="1"/>
</dbReference>
<dbReference type="PRINTS" id="PR00734">
    <property type="entry name" value="GLHYDRLASE7"/>
</dbReference>
<dbReference type="SMART" id="SM00236">
    <property type="entry name" value="fCBD"/>
    <property type="match status" value="1"/>
</dbReference>
<dbReference type="SUPFAM" id="SSF57180">
    <property type="entry name" value="Cellulose-binding domain"/>
    <property type="match status" value="1"/>
</dbReference>
<dbReference type="SUPFAM" id="SSF49899">
    <property type="entry name" value="Concanavalin A-like lectins/glucanases"/>
    <property type="match status" value="1"/>
</dbReference>
<dbReference type="PROSITE" id="PS00562">
    <property type="entry name" value="CBM1_1"/>
    <property type="match status" value="1"/>
</dbReference>
<dbReference type="PROSITE" id="PS51164">
    <property type="entry name" value="CBM1_2"/>
    <property type="match status" value="1"/>
</dbReference>
<name>CBHB_ASPNG</name>
<gene>
    <name type="primary">cbhB</name>
</gene>